<gene>
    <name evidence="1" type="primary">proA</name>
    <name type="ordered locus">ML1458</name>
</gene>
<organism>
    <name type="scientific">Mycobacterium leprae (strain TN)</name>
    <dbReference type="NCBI Taxonomy" id="272631"/>
    <lineage>
        <taxon>Bacteria</taxon>
        <taxon>Bacillati</taxon>
        <taxon>Actinomycetota</taxon>
        <taxon>Actinomycetes</taxon>
        <taxon>Mycobacteriales</taxon>
        <taxon>Mycobacteriaceae</taxon>
        <taxon>Mycobacterium</taxon>
    </lineage>
</organism>
<sequence length="409" mass="42813">MRQEVHDAARRARVAARALAVMPTVAKDHALRAAATAVTAHTEEILAANAEDLQAARATDTLAATLDRLALDRQRIDQIAGGLRQVAALPDPIGEVLRGYTLPNGLQLRQQRVPLGVVGMIYEGRPNITVDAFGLAFKSGNAALLRGSSSAAKSNQALVEVLHAALVSEDLPADAVQLLSAADRSTVTHLIQARGLVDVVIPRGGANLIDAVVRDAQVPIIETGVGNCHVYVHQAADLEVAERILLNSKTRRPSVCNAAETLLIDAAIADHTMPRLVAALQGAGVTVHGGLSGDPDKADLCREYLSMDIAVAVVDGVDAAIAHINEYGTGHTEAIVTTNMAAAQRFADGVDSATVMVNASTAFTDGGQFGFGAEIGISTQKLHARGPMGLSEMTSTKWIVWGDGQIRPA</sequence>
<evidence type="ECO:0000255" key="1">
    <source>
        <dbReference type="HAMAP-Rule" id="MF_00412"/>
    </source>
</evidence>
<feature type="chain" id="PRO_0000189751" description="Gamma-glutamyl phosphate reductase">
    <location>
        <begin position="1"/>
        <end position="409"/>
    </location>
</feature>
<comment type="function">
    <text evidence="1">Catalyzes the NADPH-dependent reduction of L-glutamate 5-phosphate into L-glutamate 5-semialdehyde and phosphate. The product spontaneously undergoes cyclization to form 1-pyrroline-5-carboxylate.</text>
</comment>
<comment type="catalytic activity">
    <reaction evidence="1">
        <text>L-glutamate 5-semialdehyde + phosphate + NADP(+) = L-glutamyl 5-phosphate + NADPH + H(+)</text>
        <dbReference type="Rhea" id="RHEA:19541"/>
        <dbReference type="ChEBI" id="CHEBI:15378"/>
        <dbReference type="ChEBI" id="CHEBI:43474"/>
        <dbReference type="ChEBI" id="CHEBI:57783"/>
        <dbReference type="ChEBI" id="CHEBI:58066"/>
        <dbReference type="ChEBI" id="CHEBI:58274"/>
        <dbReference type="ChEBI" id="CHEBI:58349"/>
        <dbReference type="EC" id="1.2.1.41"/>
    </reaction>
</comment>
<comment type="pathway">
    <text evidence="1">Amino-acid biosynthesis; L-proline biosynthesis; L-glutamate 5-semialdehyde from L-glutamate: step 2/2.</text>
</comment>
<comment type="subcellular location">
    <subcellularLocation>
        <location evidence="1">Cytoplasm</location>
    </subcellularLocation>
</comment>
<comment type="similarity">
    <text evidence="1">Belongs to the gamma-glutamyl phosphate reductase family.</text>
</comment>
<proteinExistence type="inferred from homology"/>
<name>PROA_MYCLE</name>
<dbReference type="EC" id="1.2.1.41" evidence="1"/>
<dbReference type="EMBL" id="AL583922">
    <property type="protein sequence ID" value="CAC30408.1"/>
    <property type="molecule type" value="Genomic_DNA"/>
</dbReference>
<dbReference type="PIR" id="C87091">
    <property type="entry name" value="C87091"/>
</dbReference>
<dbReference type="RefSeq" id="NP_302027.1">
    <property type="nucleotide sequence ID" value="NC_002677.1"/>
</dbReference>
<dbReference type="SMR" id="Q9CBZ7"/>
<dbReference type="STRING" id="272631.gene:17575296"/>
<dbReference type="KEGG" id="mle:ML1458"/>
<dbReference type="PATRIC" id="fig|272631.5.peg.2724"/>
<dbReference type="Leproma" id="ML1458"/>
<dbReference type="eggNOG" id="COG0014">
    <property type="taxonomic scope" value="Bacteria"/>
</dbReference>
<dbReference type="HOGENOM" id="CLU_030231_0_0_11"/>
<dbReference type="OrthoDB" id="9809970at2"/>
<dbReference type="UniPathway" id="UPA00098">
    <property type="reaction ID" value="UER00360"/>
</dbReference>
<dbReference type="Proteomes" id="UP000000806">
    <property type="component" value="Chromosome"/>
</dbReference>
<dbReference type="GO" id="GO:0005737">
    <property type="term" value="C:cytoplasm"/>
    <property type="evidence" value="ECO:0007669"/>
    <property type="project" value="UniProtKB-SubCell"/>
</dbReference>
<dbReference type="GO" id="GO:0004350">
    <property type="term" value="F:glutamate-5-semialdehyde dehydrogenase activity"/>
    <property type="evidence" value="ECO:0007669"/>
    <property type="project" value="UniProtKB-UniRule"/>
</dbReference>
<dbReference type="GO" id="GO:0050661">
    <property type="term" value="F:NADP binding"/>
    <property type="evidence" value="ECO:0007669"/>
    <property type="project" value="InterPro"/>
</dbReference>
<dbReference type="GO" id="GO:0055129">
    <property type="term" value="P:L-proline biosynthetic process"/>
    <property type="evidence" value="ECO:0007669"/>
    <property type="project" value="UniProtKB-UniRule"/>
</dbReference>
<dbReference type="CDD" id="cd07079">
    <property type="entry name" value="ALDH_F18-19_ProA-GPR"/>
    <property type="match status" value="1"/>
</dbReference>
<dbReference type="FunFam" id="3.40.309.10:FF:000006">
    <property type="entry name" value="Gamma-glutamyl phosphate reductase"/>
    <property type="match status" value="1"/>
</dbReference>
<dbReference type="Gene3D" id="3.40.605.10">
    <property type="entry name" value="Aldehyde Dehydrogenase, Chain A, domain 1"/>
    <property type="match status" value="1"/>
</dbReference>
<dbReference type="Gene3D" id="3.40.309.10">
    <property type="entry name" value="Aldehyde Dehydrogenase, Chain A, domain 2"/>
    <property type="match status" value="1"/>
</dbReference>
<dbReference type="HAMAP" id="MF_00412">
    <property type="entry name" value="ProA"/>
    <property type="match status" value="1"/>
</dbReference>
<dbReference type="InterPro" id="IPR016161">
    <property type="entry name" value="Ald_DH/histidinol_DH"/>
</dbReference>
<dbReference type="InterPro" id="IPR016163">
    <property type="entry name" value="Ald_DH_C"/>
</dbReference>
<dbReference type="InterPro" id="IPR016162">
    <property type="entry name" value="Ald_DH_N"/>
</dbReference>
<dbReference type="InterPro" id="IPR015590">
    <property type="entry name" value="Aldehyde_DH_dom"/>
</dbReference>
<dbReference type="InterPro" id="IPR020593">
    <property type="entry name" value="G-glutamylP_reductase_CS"/>
</dbReference>
<dbReference type="InterPro" id="IPR012134">
    <property type="entry name" value="Glu-5-SA_DH"/>
</dbReference>
<dbReference type="InterPro" id="IPR000965">
    <property type="entry name" value="GPR_dom"/>
</dbReference>
<dbReference type="NCBIfam" id="NF001221">
    <property type="entry name" value="PRK00197.1"/>
    <property type="match status" value="1"/>
</dbReference>
<dbReference type="NCBIfam" id="TIGR00407">
    <property type="entry name" value="proA"/>
    <property type="match status" value="1"/>
</dbReference>
<dbReference type="PANTHER" id="PTHR11063:SF8">
    <property type="entry name" value="DELTA-1-PYRROLINE-5-CARBOXYLATE SYNTHASE"/>
    <property type="match status" value="1"/>
</dbReference>
<dbReference type="PANTHER" id="PTHR11063">
    <property type="entry name" value="GLUTAMATE SEMIALDEHYDE DEHYDROGENASE"/>
    <property type="match status" value="1"/>
</dbReference>
<dbReference type="Pfam" id="PF00171">
    <property type="entry name" value="Aldedh"/>
    <property type="match status" value="2"/>
</dbReference>
<dbReference type="PIRSF" id="PIRSF000151">
    <property type="entry name" value="GPR"/>
    <property type="match status" value="1"/>
</dbReference>
<dbReference type="SUPFAM" id="SSF53720">
    <property type="entry name" value="ALDH-like"/>
    <property type="match status" value="1"/>
</dbReference>
<dbReference type="PROSITE" id="PS01223">
    <property type="entry name" value="PROA"/>
    <property type="match status" value="1"/>
</dbReference>
<protein>
    <recommendedName>
        <fullName evidence="1">Gamma-glutamyl phosphate reductase</fullName>
        <shortName evidence="1">GPR</shortName>
        <ecNumber evidence="1">1.2.1.41</ecNumber>
    </recommendedName>
    <alternativeName>
        <fullName evidence="1">Glutamate-5-semialdehyde dehydrogenase</fullName>
    </alternativeName>
    <alternativeName>
        <fullName evidence="1">Glutamyl-gamma-semialdehyde dehydrogenase</fullName>
        <shortName evidence="1">GSA dehydrogenase</shortName>
    </alternativeName>
</protein>
<reference key="1">
    <citation type="journal article" date="2001" name="Nature">
        <title>Massive gene decay in the leprosy bacillus.</title>
        <authorList>
            <person name="Cole S.T."/>
            <person name="Eiglmeier K."/>
            <person name="Parkhill J."/>
            <person name="James K.D."/>
            <person name="Thomson N.R."/>
            <person name="Wheeler P.R."/>
            <person name="Honore N."/>
            <person name="Garnier T."/>
            <person name="Churcher C.M."/>
            <person name="Harris D.E."/>
            <person name="Mungall K.L."/>
            <person name="Basham D."/>
            <person name="Brown D."/>
            <person name="Chillingworth T."/>
            <person name="Connor R."/>
            <person name="Davies R.M."/>
            <person name="Devlin K."/>
            <person name="Duthoy S."/>
            <person name="Feltwell T."/>
            <person name="Fraser A."/>
            <person name="Hamlin N."/>
            <person name="Holroyd S."/>
            <person name="Hornsby T."/>
            <person name="Jagels K."/>
            <person name="Lacroix C."/>
            <person name="Maclean J."/>
            <person name="Moule S."/>
            <person name="Murphy L.D."/>
            <person name="Oliver K."/>
            <person name="Quail M.A."/>
            <person name="Rajandream M.A."/>
            <person name="Rutherford K.M."/>
            <person name="Rutter S."/>
            <person name="Seeger K."/>
            <person name="Simon S."/>
            <person name="Simmonds M."/>
            <person name="Skelton J."/>
            <person name="Squares R."/>
            <person name="Squares S."/>
            <person name="Stevens K."/>
            <person name="Taylor K."/>
            <person name="Whitehead S."/>
            <person name="Woodward J.R."/>
            <person name="Barrell B.G."/>
        </authorList>
    </citation>
    <scope>NUCLEOTIDE SEQUENCE [LARGE SCALE GENOMIC DNA]</scope>
    <source>
        <strain>TN</strain>
    </source>
</reference>
<keyword id="KW-0028">Amino-acid biosynthesis</keyword>
<keyword id="KW-0963">Cytoplasm</keyword>
<keyword id="KW-0521">NADP</keyword>
<keyword id="KW-0560">Oxidoreductase</keyword>
<keyword id="KW-0641">Proline biosynthesis</keyword>
<keyword id="KW-1185">Reference proteome</keyword>
<accession>Q9CBZ7</accession>